<gene>
    <name evidence="1" type="primary">gpt</name>
    <name type="ordered locus">ECIAI39_0413</name>
</gene>
<proteinExistence type="inferred from homology"/>
<keyword id="KW-0997">Cell inner membrane</keyword>
<keyword id="KW-1003">Cell membrane</keyword>
<keyword id="KW-0328">Glycosyltransferase</keyword>
<keyword id="KW-0460">Magnesium</keyword>
<keyword id="KW-0472">Membrane</keyword>
<keyword id="KW-0479">Metal-binding</keyword>
<keyword id="KW-0660">Purine salvage</keyword>
<keyword id="KW-0808">Transferase</keyword>
<protein>
    <recommendedName>
        <fullName evidence="1">Xanthine-guanine phosphoribosyltransferase</fullName>
        <shortName evidence="1">XGPRT</shortName>
        <ecNumber evidence="1">2.4.2.-</ecNumber>
        <ecNumber evidence="1">2.4.2.22</ecNumber>
    </recommendedName>
    <alternativeName>
        <fullName evidence="1">Xanthine phosphoribosyltransferase</fullName>
    </alternativeName>
</protein>
<comment type="function">
    <text evidence="1">Purine salvage pathway enzyme that catalyzes the transfer of the ribosyl-5-phosphate group from 5-phospho-alpha-D-ribose 1-diphosphate (PRPP) to the N9 position of the 6-oxopurines guanine and xanthine to form the corresponding ribonucleotides GMP (guanosine 5'-monophosphate) and XMP (xanthosine 5'-monophosphate), with the release of PPi. To a lesser extent, also acts on hypoxanthine.</text>
</comment>
<comment type="catalytic activity">
    <reaction evidence="1">
        <text>GMP + diphosphate = guanine + 5-phospho-alpha-D-ribose 1-diphosphate</text>
        <dbReference type="Rhea" id="RHEA:25424"/>
        <dbReference type="ChEBI" id="CHEBI:16235"/>
        <dbReference type="ChEBI" id="CHEBI:33019"/>
        <dbReference type="ChEBI" id="CHEBI:58017"/>
        <dbReference type="ChEBI" id="CHEBI:58115"/>
    </reaction>
    <physiologicalReaction direction="right-to-left" evidence="1">
        <dbReference type="Rhea" id="RHEA:25426"/>
    </physiologicalReaction>
</comment>
<comment type="catalytic activity">
    <reaction evidence="1">
        <text>XMP + diphosphate = xanthine + 5-phospho-alpha-D-ribose 1-diphosphate</text>
        <dbReference type="Rhea" id="RHEA:10800"/>
        <dbReference type="ChEBI" id="CHEBI:17712"/>
        <dbReference type="ChEBI" id="CHEBI:33019"/>
        <dbReference type="ChEBI" id="CHEBI:57464"/>
        <dbReference type="ChEBI" id="CHEBI:58017"/>
        <dbReference type="EC" id="2.4.2.22"/>
    </reaction>
    <physiologicalReaction direction="right-to-left" evidence="1">
        <dbReference type="Rhea" id="RHEA:10802"/>
    </physiologicalReaction>
</comment>
<comment type="catalytic activity">
    <reaction evidence="1">
        <text>IMP + diphosphate = hypoxanthine + 5-phospho-alpha-D-ribose 1-diphosphate</text>
        <dbReference type="Rhea" id="RHEA:17973"/>
        <dbReference type="ChEBI" id="CHEBI:17368"/>
        <dbReference type="ChEBI" id="CHEBI:33019"/>
        <dbReference type="ChEBI" id="CHEBI:58017"/>
        <dbReference type="ChEBI" id="CHEBI:58053"/>
    </reaction>
    <physiologicalReaction direction="right-to-left" evidence="1">
        <dbReference type="Rhea" id="RHEA:17975"/>
    </physiologicalReaction>
</comment>
<comment type="cofactor">
    <cofactor evidence="1">
        <name>Mg(2+)</name>
        <dbReference type="ChEBI" id="CHEBI:18420"/>
    </cofactor>
</comment>
<comment type="pathway">
    <text evidence="1">Purine metabolism; GMP biosynthesis via salvage pathway; GMP from guanine: step 1/1.</text>
</comment>
<comment type="pathway">
    <text evidence="1">Purine metabolism; XMP biosynthesis via salvage pathway; XMP from xanthine: step 1/1.</text>
</comment>
<comment type="subunit">
    <text evidence="1">Homotetramer.</text>
</comment>
<comment type="subcellular location">
    <subcellularLocation>
        <location evidence="1">Cell inner membrane</location>
        <topology evidence="1">Peripheral membrane protein</topology>
    </subcellularLocation>
</comment>
<comment type="similarity">
    <text evidence="1">Belongs to the purine/pyrimidine phosphoribosyltransferase family. XGPT subfamily.</text>
</comment>
<accession>B7NK87</accession>
<evidence type="ECO:0000255" key="1">
    <source>
        <dbReference type="HAMAP-Rule" id="MF_01903"/>
    </source>
</evidence>
<dbReference type="EC" id="2.4.2.-" evidence="1"/>
<dbReference type="EC" id="2.4.2.22" evidence="1"/>
<dbReference type="EMBL" id="CU928164">
    <property type="protein sequence ID" value="CAR16552.1"/>
    <property type="molecule type" value="Genomic_DNA"/>
</dbReference>
<dbReference type="RefSeq" id="WP_001291994.1">
    <property type="nucleotide sequence ID" value="NC_011750.1"/>
</dbReference>
<dbReference type="RefSeq" id="YP_002406447.1">
    <property type="nucleotide sequence ID" value="NC_011750.1"/>
</dbReference>
<dbReference type="SMR" id="B7NK87"/>
<dbReference type="STRING" id="585057.ECIAI39_0413"/>
<dbReference type="KEGG" id="ect:ECIAI39_0413"/>
<dbReference type="PATRIC" id="fig|585057.6.peg.443"/>
<dbReference type="HOGENOM" id="CLU_080904_3_0_6"/>
<dbReference type="UniPathway" id="UPA00602">
    <property type="reaction ID" value="UER00658"/>
</dbReference>
<dbReference type="UniPathway" id="UPA00909">
    <property type="reaction ID" value="UER00887"/>
</dbReference>
<dbReference type="Proteomes" id="UP000000749">
    <property type="component" value="Chromosome"/>
</dbReference>
<dbReference type="GO" id="GO:0005829">
    <property type="term" value="C:cytosol"/>
    <property type="evidence" value="ECO:0007669"/>
    <property type="project" value="TreeGrafter"/>
</dbReference>
<dbReference type="GO" id="GO:0005886">
    <property type="term" value="C:plasma membrane"/>
    <property type="evidence" value="ECO:0007669"/>
    <property type="project" value="UniProtKB-SubCell"/>
</dbReference>
<dbReference type="GO" id="GO:0052657">
    <property type="term" value="F:guanine phosphoribosyltransferase activity"/>
    <property type="evidence" value="ECO:0007669"/>
    <property type="project" value="RHEA"/>
</dbReference>
<dbReference type="GO" id="GO:0004422">
    <property type="term" value="F:hypoxanthine phosphoribosyltransferase activity"/>
    <property type="evidence" value="ECO:0007669"/>
    <property type="project" value="TreeGrafter"/>
</dbReference>
<dbReference type="GO" id="GO:0000287">
    <property type="term" value="F:magnesium ion binding"/>
    <property type="evidence" value="ECO:0007669"/>
    <property type="project" value="UniProtKB-UniRule"/>
</dbReference>
<dbReference type="GO" id="GO:0000310">
    <property type="term" value="F:xanthine phosphoribosyltransferase activity"/>
    <property type="evidence" value="ECO:0007669"/>
    <property type="project" value="UniProtKB-UniRule"/>
</dbReference>
<dbReference type="GO" id="GO:0032263">
    <property type="term" value="P:GMP salvage"/>
    <property type="evidence" value="ECO:0007669"/>
    <property type="project" value="UniProtKB-UniRule"/>
</dbReference>
<dbReference type="GO" id="GO:0032264">
    <property type="term" value="P:IMP salvage"/>
    <property type="evidence" value="ECO:0007669"/>
    <property type="project" value="TreeGrafter"/>
</dbReference>
<dbReference type="GO" id="GO:0006166">
    <property type="term" value="P:purine ribonucleoside salvage"/>
    <property type="evidence" value="ECO:0007669"/>
    <property type="project" value="UniProtKB-KW"/>
</dbReference>
<dbReference type="GO" id="GO:0032265">
    <property type="term" value="P:XMP salvage"/>
    <property type="evidence" value="ECO:0007669"/>
    <property type="project" value="UniProtKB-UniRule"/>
</dbReference>
<dbReference type="CDD" id="cd06223">
    <property type="entry name" value="PRTases_typeI"/>
    <property type="match status" value="1"/>
</dbReference>
<dbReference type="FunFam" id="3.40.50.2020:FF:000009">
    <property type="entry name" value="Xanthine phosphoribosyltransferase"/>
    <property type="match status" value="1"/>
</dbReference>
<dbReference type="Gene3D" id="3.40.50.2020">
    <property type="match status" value="1"/>
</dbReference>
<dbReference type="HAMAP" id="MF_01903">
    <property type="entry name" value="XGPRT"/>
    <property type="match status" value="1"/>
</dbReference>
<dbReference type="InterPro" id="IPR000836">
    <property type="entry name" value="PRibTrfase_dom"/>
</dbReference>
<dbReference type="InterPro" id="IPR029057">
    <property type="entry name" value="PRTase-like"/>
</dbReference>
<dbReference type="InterPro" id="IPR023747">
    <property type="entry name" value="Xanthine_Guanine_PRibTrfase"/>
</dbReference>
<dbReference type="NCBIfam" id="NF006613">
    <property type="entry name" value="PRK09177.1"/>
    <property type="match status" value="1"/>
</dbReference>
<dbReference type="PANTHER" id="PTHR39563">
    <property type="entry name" value="XANTHINE PHOSPHORIBOSYLTRANSFERASE"/>
    <property type="match status" value="1"/>
</dbReference>
<dbReference type="PANTHER" id="PTHR39563:SF1">
    <property type="entry name" value="XANTHINE-GUANINE PHOSPHORIBOSYLTRANSFERASE"/>
    <property type="match status" value="1"/>
</dbReference>
<dbReference type="Pfam" id="PF00156">
    <property type="entry name" value="Pribosyltran"/>
    <property type="match status" value="1"/>
</dbReference>
<dbReference type="SUPFAM" id="SSF53271">
    <property type="entry name" value="PRTase-like"/>
    <property type="match status" value="1"/>
</dbReference>
<dbReference type="PROSITE" id="PS00103">
    <property type="entry name" value="PUR_PYR_PR_TRANSFER"/>
    <property type="match status" value="1"/>
</dbReference>
<reference key="1">
    <citation type="journal article" date="2009" name="PLoS Genet.">
        <title>Organised genome dynamics in the Escherichia coli species results in highly diverse adaptive paths.</title>
        <authorList>
            <person name="Touchon M."/>
            <person name="Hoede C."/>
            <person name="Tenaillon O."/>
            <person name="Barbe V."/>
            <person name="Baeriswyl S."/>
            <person name="Bidet P."/>
            <person name="Bingen E."/>
            <person name="Bonacorsi S."/>
            <person name="Bouchier C."/>
            <person name="Bouvet O."/>
            <person name="Calteau A."/>
            <person name="Chiapello H."/>
            <person name="Clermont O."/>
            <person name="Cruveiller S."/>
            <person name="Danchin A."/>
            <person name="Diard M."/>
            <person name="Dossat C."/>
            <person name="Karoui M.E."/>
            <person name="Frapy E."/>
            <person name="Garry L."/>
            <person name="Ghigo J.M."/>
            <person name="Gilles A.M."/>
            <person name="Johnson J."/>
            <person name="Le Bouguenec C."/>
            <person name="Lescat M."/>
            <person name="Mangenot S."/>
            <person name="Martinez-Jehanne V."/>
            <person name="Matic I."/>
            <person name="Nassif X."/>
            <person name="Oztas S."/>
            <person name="Petit M.A."/>
            <person name="Pichon C."/>
            <person name="Rouy Z."/>
            <person name="Ruf C.S."/>
            <person name="Schneider D."/>
            <person name="Tourret J."/>
            <person name="Vacherie B."/>
            <person name="Vallenet D."/>
            <person name="Medigue C."/>
            <person name="Rocha E.P.C."/>
            <person name="Denamur E."/>
        </authorList>
    </citation>
    <scope>NUCLEOTIDE SEQUENCE [LARGE SCALE GENOMIC DNA]</scope>
    <source>
        <strain>IAI39 / ExPEC</strain>
    </source>
</reference>
<organism>
    <name type="scientific">Escherichia coli O7:K1 (strain IAI39 / ExPEC)</name>
    <dbReference type="NCBI Taxonomy" id="585057"/>
    <lineage>
        <taxon>Bacteria</taxon>
        <taxon>Pseudomonadati</taxon>
        <taxon>Pseudomonadota</taxon>
        <taxon>Gammaproteobacteria</taxon>
        <taxon>Enterobacterales</taxon>
        <taxon>Enterobacteriaceae</taxon>
        <taxon>Escherichia</taxon>
    </lineage>
</organism>
<feature type="chain" id="PRO_1000188741" description="Xanthine-guanine phosphoribosyltransferase">
    <location>
        <begin position="1"/>
        <end position="152"/>
    </location>
</feature>
<feature type="binding site" evidence="1">
    <location>
        <begin position="37"/>
        <end position="38"/>
    </location>
    <ligand>
        <name>5-phospho-alpha-D-ribose 1-diphosphate</name>
        <dbReference type="ChEBI" id="CHEBI:58017"/>
    </ligand>
</feature>
<feature type="binding site" evidence="1">
    <location>
        <position position="69"/>
    </location>
    <ligand>
        <name>5-phospho-alpha-D-ribose 1-diphosphate</name>
        <dbReference type="ChEBI" id="CHEBI:58017"/>
    </ligand>
</feature>
<feature type="binding site" evidence="1">
    <location>
        <position position="69"/>
    </location>
    <ligand>
        <name>GMP</name>
        <dbReference type="ChEBI" id="CHEBI:58115"/>
    </ligand>
</feature>
<feature type="binding site" evidence="1">
    <location>
        <begin position="88"/>
        <end position="96"/>
    </location>
    <ligand>
        <name>5-phospho-alpha-D-ribose 1-diphosphate</name>
        <dbReference type="ChEBI" id="CHEBI:58017"/>
    </ligand>
</feature>
<feature type="binding site" evidence="1">
    <location>
        <position position="89"/>
    </location>
    <ligand>
        <name>Mg(2+)</name>
        <dbReference type="ChEBI" id="CHEBI:18420"/>
    </ligand>
</feature>
<feature type="binding site" evidence="1">
    <location>
        <begin position="92"/>
        <end position="96"/>
    </location>
    <ligand>
        <name>GMP</name>
        <dbReference type="ChEBI" id="CHEBI:58115"/>
    </ligand>
</feature>
<feature type="binding site" evidence="1">
    <location>
        <position position="92"/>
    </location>
    <ligand>
        <name>guanine</name>
        <dbReference type="ChEBI" id="CHEBI:16235"/>
    </ligand>
</feature>
<feature type="binding site" evidence="1">
    <location>
        <position position="92"/>
    </location>
    <ligand>
        <name>xanthine</name>
        <dbReference type="ChEBI" id="CHEBI:17712"/>
    </ligand>
</feature>
<feature type="binding site" evidence="1">
    <location>
        <begin position="134"/>
        <end position="135"/>
    </location>
    <ligand>
        <name>GMP</name>
        <dbReference type="ChEBI" id="CHEBI:58115"/>
    </ligand>
</feature>
<feature type="binding site" evidence="1">
    <location>
        <position position="135"/>
    </location>
    <ligand>
        <name>guanine</name>
        <dbReference type="ChEBI" id="CHEBI:16235"/>
    </ligand>
</feature>
<feature type="binding site" evidence="1">
    <location>
        <position position="135"/>
    </location>
    <ligand>
        <name>xanthine</name>
        <dbReference type="ChEBI" id="CHEBI:17712"/>
    </ligand>
</feature>
<sequence length="152" mass="16996">MSEKYIVTWDRLQIHARKLASRLMPSEQWKGIIAVSRGGLVPGALLARELGIRHVDTVCISSYDHDNQRELKVLKRAEGDGEGFIVIDDLVDTGGTAVAIREMYPKAHFVTIFAKPAGRPLVDDYVVDIPQDTWIEQPWDMGVVFVPPISGR</sequence>
<name>XGPT_ECO7I</name>